<keyword id="KW-0067">ATP-binding</keyword>
<keyword id="KW-0173">Coenzyme A biosynthesis</keyword>
<keyword id="KW-0963">Cytoplasm</keyword>
<keyword id="KW-0418">Kinase</keyword>
<keyword id="KW-0547">Nucleotide-binding</keyword>
<keyword id="KW-1185">Reference proteome</keyword>
<keyword id="KW-0808">Transferase</keyword>
<sequence>MRVIGLTGGIGSGKSYVAERLAERGAAVVDTDAIAHEITAPGGAAIPKLVEAFGPGILRADGAMDRDAMRALAFSDATAKARLERITHPLIREISLSRGAAAQASDACPYLVYVVPLLVESLSGHHSWRALVDRILVIDCPVETQIARVIARNGLPRALVESIVARQATREARLAVADDVIDNGGALADLLPQIDRLDLAYRAH</sequence>
<accession>Q8XVK2</accession>
<evidence type="ECO:0000255" key="1">
    <source>
        <dbReference type="HAMAP-Rule" id="MF_00376"/>
    </source>
</evidence>
<gene>
    <name evidence="1" type="primary">coaE</name>
    <name type="ordered locus">RSc2828</name>
    <name type="ORF">RS00277</name>
</gene>
<protein>
    <recommendedName>
        <fullName evidence="1">Dephospho-CoA kinase</fullName>
        <ecNumber evidence="1">2.7.1.24</ecNumber>
    </recommendedName>
    <alternativeName>
        <fullName evidence="1">Dephosphocoenzyme A kinase</fullName>
    </alternativeName>
</protein>
<comment type="function">
    <text evidence="1">Catalyzes the phosphorylation of the 3'-hydroxyl group of dephosphocoenzyme A to form coenzyme A.</text>
</comment>
<comment type="catalytic activity">
    <reaction evidence="1">
        <text>3'-dephospho-CoA + ATP = ADP + CoA + H(+)</text>
        <dbReference type="Rhea" id="RHEA:18245"/>
        <dbReference type="ChEBI" id="CHEBI:15378"/>
        <dbReference type="ChEBI" id="CHEBI:30616"/>
        <dbReference type="ChEBI" id="CHEBI:57287"/>
        <dbReference type="ChEBI" id="CHEBI:57328"/>
        <dbReference type="ChEBI" id="CHEBI:456216"/>
        <dbReference type="EC" id="2.7.1.24"/>
    </reaction>
</comment>
<comment type="pathway">
    <text evidence="1">Cofactor biosynthesis; coenzyme A biosynthesis; CoA from (R)-pantothenate: step 5/5.</text>
</comment>
<comment type="subcellular location">
    <subcellularLocation>
        <location evidence="1">Cytoplasm</location>
    </subcellularLocation>
</comment>
<comment type="similarity">
    <text evidence="1">Belongs to the CoaE family.</text>
</comment>
<name>COAE_RALN1</name>
<organism>
    <name type="scientific">Ralstonia nicotianae (strain ATCC BAA-1114 / GMI1000)</name>
    <name type="common">Ralstonia solanacearum</name>
    <dbReference type="NCBI Taxonomy" id="267608"/>
    <lineage>
        <taxon>Bacteria</taxon>
        <taxon>Pseudomonadati</taxon>
        <taxon>Pseudomonadota</taxon>
        <taxon>Betaproteobacteria</taxon>
        <taxon>Burkholderiales</taxon>
        <taxon>Burkholderiaceae</taxon>
        <taxon>Ralstonia</taxon>
        <taxon>Ralstonia solanacearum species complex</taxon>
    </lineage>
</organism>
<feature type="chain" id="PRO_0000172986" description="Dephospho-CoA kinase">
    <location>
        <begin position="1"/>
        <end position="204"/>
    </location>
</feature>
<feature type="domain" description="DPCK" evidence="1">
    <location>
        <begin position="3"/>
        <end position="204"/>
    </location>
</feature>
<feature type="binding site" evidence="1">
    <location>
        <begin position="11"/>
        <end position="16"/>
    </location>
    <ligand>
        <name>ATP</name>
        <dbReference type="ChEBI" id="CHEBI:30616"/>
    </ligand>
</feature>
<dbReference type="EC" id="2.7.1.24" evidence="1"/>
<dbReference type="EMBL" id="AL646052">
    <property type="protein sequence ID" value="CAD16535.1"/>
    <property type="molecule type" value="Genomic_DNA"/>
</dbReference>
<dbReference type="RefSeq" id="WP_011002734.1">
    <property type="nucleotide sequence ID" value="NC_003295.1"/>
</dbReference>
<dbReference type="SMR" id="Q8XVK2"/>
<dbReference type="STRING" id="267608.RSc2828"/>
<dbReference type="EnsemblBacteria" id="CAD16535">
    <property type="protein sequence ID" value="CAD16535"/>
    <property type="gene ID" value="RSc2828"/>
</dbReference>
<dbReference type="KEGG" id="rso:RSc2828"/>
<dbReference type="eggNOG" id="COG0237">
    <property type="taxonomic scope" value="Bacteria"/>
</dbReference>
<dbReference type="HOGENOM" id="CLU_057180_1_2_4"/>
<dbReference type="UniPathway" id="UPA00241">
    <property type="reaction ID" value="UER00356"/>
</dbReference>
<dbReference type="Proteomes" id="UP000001436">
    <property type="component" value="Chromosome"/>
</dbReference>
<dbReference type="GO" id="GO:0005737">
    <property type="term" value="C:cytoplasm"/>
    <property type="evidence" value="ECO:0007669"/>
    <property type="project" value="UniProtKB-SubCell"/>
</dbReference>
<dbReference type="GO" id="GO:0005524">
    <property type="term" value="F:ATP binding"/>
    <property type="evidence" value="ECO:0007669"/>
    <property type="project" value="UniProtKB-UniRule"/>
</dbReference>
<dbReference type="GO" id="GO:0004140">
    <property type="term" value="F:dephospho-CoA kinase activity"/>
    <property type="evidence" value="ECO:0007669"/>
    <property type="project" value="UniProtKB-UniRule"/>
</dbReference>
<dbReference type="GO" id="GO:0015937">
    <property type="term" value="P:coenzyme A biosynthetic process"/>
    <property type="evidence" value="ECO:0007669"/>
    <property type="project" value="UniProtKB-UniRule"/>
</dbReference>
<dbReference type="CDD" id="cd02022">
    <property type="entry name" value="DPCK"/>
    <property type="match status" value="1"/>
</dbReference>
<dbReference type="Gene3D" id="3.40.50.300">
    <property type="entry name" value="P-loop containing nucleotide triphosphate hydrolases"/>
    <property type="match status" value="1"/>
</dbReference>
<dbReference type="HAMAP" id="MF_00376">
    <property type="entry name" value="Dephospho_CoA_kinase"/>
    <property type="match status" value="1"/>
</dbReference>
<dbReference type="InterPro" id="IPR001977">
    <property type="entry name" value="Depp_CoAkinase"/>
</dbReference>
<dbReference type="InterPro" id="IPR027417">
    <property type="entry name" value="P-loop_NTPase"/>
</dbReference>
<dbReference type="NCBIfam" id="TIGR00152">
    <property type="entry name" value="dephospho-CoA kinase"/>
    <property type="match status" value="1"/>
</dbReference>
<dbReference type="PANTHER" id="PTHR10695:SF46">
    <property type="entry name" value="BIFUNCTIONAL COENZYME A SYNTHASE-RELATED"/>
    <property type="match status" value="1"/>
</dbReference>
<dbReference type="PANTHER" id="PTHR10695">
    <property type="entry name" value="DEPHOSPHO-COA KINASE-RELATED"/>
    <property type="match status" value="1"/>
</dbReference>
<dbReference type="Pfam" id="PF01121">
    <property type="entry name" value="CoaE"/>
    <property type="match status" value="1"/>
</dbReference>
<dbReference type="SUPFAM" id="SSF52540">
    <property type="entry name" value="P-loop containing nucleoside triphosphate hydrolases"/>
    <property type="match status" value="1"/>
</dbReference>
<dbReference type="PROSITE" id="PS51219">
    <property type="entry name" value="DPCK"/>
    <property type="match status" value="1"/>
</dbReference>
<proteinExistence type="inferred from homology"/>
<reference key="1">
    <citation type="journal article" date="2002" name="Nature">
        <title>Genome sequence of the plant pathogen Ralstonia solanacearum.</title>
        <authorList>
            <person name="Salanoubat M."/>
            <person name="Genin S."/>
            <person name="Artiguenave F."/>
            <person name="Gouzy J."/>
            <person name="Mangenot S."/>
            <person name="Arlat M."/>
            <person name="Billault A."/>
            <person name="Brottier P."/>
            <person name="Camus J.-C."/>
            <person name="Cattolico L."/>
            <person name="Chandler M."/>
            <person name="Choisne N."/>
            <person name="Claudel-Renard C."/>
            <person name="Cunnac S."/>
            <person name="Demange N."/>
            <person name="Gaspin C."/>
            <person name="Lavie M."/>
            <person name="Moisan A."/>
            <person name="Robert C."/>
            <person name="Saurin W."/>
            <person name="Schiex T."/>
            <person name="Siguier P."/>
            <person name="Thebault P."/>
            <person name="Whalen M."/>
            <person name="Wincker P."/>
            <person name="Levy M."/>
            <person name="Weissenbach J."/>
            <person name="Boucher C.A."/>
        </authorList>
    </citation>
    <scope>NUCLEOTIDE SEQUENCE [LARGE SCALE GENOMIC DNA]</scope>
    <source>
        <strain>ATCC BAA-1114 / GMI1000</strain>
    </source>
</reference>